<accession>Q5GSW1</accession>
<protein>
    <recommendedName>
        <fullName evidence="1">Small ribosomal subunit protein uS5</fullName>
    </recommendedName>
    <alternativeName>
        <fullName evidence="2">30S ribosomal protein S5</fullName>
    </alternativeName>
</protein>
<evidence type="ECO:0000255" key="1">
    <source>
        <dbReference type="HAMAP-Rule" id="MF_01307"/>
    </source>
</evidence>
<evidence type="ECO:0000305" key="2"/>
<keyword id="KW-1185">Reference proteome</keyword>
<keyword id="KW-0687">Ribonucleoprotein</keyword>
<keyword id="KW-0689">Ribosomal protein</keyword>
<keyword id="KW-0694">RNA-binding</keyword>
<keyword id="KW-0699">rRNA-binding</keyword>
<organism>
    <name type="scientific">Wolbachia sp. subsp. Brugia malayi (strain TRS)</name>
    <dbReference type="NCBI Taxonomy" id="292805"/>
    <lineage>
        <taxon>Bacteria</taxon>
        <taxon>Pseudomonadati</taxon>
        <taxon>Pseudomonadota</taxon>
        <taxon>Alphaproteobacteria</taxon>
        <taxon>Rickettsiales</taxon>
        <taxon>Anaplasmataceae</taxon>
        <taxon>Wolbachieae</taxon>
        <taxon>Wolbachia</taxon>
    </lineage>
</organism>
<gene>
    <name evidence="1" type="primary">rpsE</name>
    <name type="ordered locus">Wbm0324</name>
</gene>
<reference key="1">
    <citation type="journal article" date="2005" name="PLoS Biol.">
        <title>The Wolbachia genome of Brugia malayi: endosymbiont evolution within a human pathogenic nematode.</title>
        <authorList>
            <person name="Foster J."/>
            <person name="Ganatra M."/>
            <person name="Kamal I."/>
            <person name="Ware J."/>
            <person name="Makarova K."/>
            <person name="Ivanova N."/>
            <person name="Bhattacharyya A."/>
            <person name="Kapatral V."/>
            <person name="Kumar S."/>
            <person name="Posfai J."/>
            <person name="Vincze T."/>
            <person name="Ingram J."/>
            <person name="Moran L."/>
            <person name="Lapidus A."/>
            <person name="Omelchenko M."/>
            <person name="Kyrpides N."/>
            <person name="Ghedin E."/>
            <person name="Wang S."/>
            <person name="Goltsman E."/>
            <person name="Joukov V."/>
            <person name="Ostrovskaya O."/>
            <person name="Tsukerman K."/>
            <person name="Mazur M."/>
            <person name="Comb D."/>
            <person name="Koonin E."/>
            <person name="Slatko B."/>
        </authorList>
    </citation>
    <scope>NUCLEOTIDE SEQUENCE [LARGE SCALE GENOMIC DNA]</scope>
    <source>
        <strain>TRS</strain>
    </source>
</reference>
<feature type="chain" id="PRO_0000293204" description="Small ribosomal subunit protein uS5">
    <location>
        <begin position="1"/>
        <end position="170"/>
    </location>
</feature>
<feature type="domain" description="S5 DRBM" evidence="1">
    <location>
        <begin position="12"/>
        <end position="75"/>
    </location>
</feature>
<sequence length="170" mass="18550">MTIKNFQNNNDWSELLVSVRRVTTVTKGGRRFSFSILVVVGDEKGRVGCGMGKHAEVAEARIKAVNAAKKSMIRVYLREGRTLHHDIKAKFCSGEIVLRAARAGTGIIAGGAIRSVFEVLGIKDVVAKSTRSNNPHNVICAVFKAFDNMLSPRQVASKRGKKISEVVGNR</sequence>
<comment type="function">
    <text evidence="1">With S4 and S12 plays an important role in translational accuracy.</text>
</comment>
<comment type="function">
    <text evidence="1">Located at the back of the 30S subunit body where it stabilizes the conformation of the head with respect to the body.</text>
</comment>
<comment type="subunit">
    <text evidence="1">Part of the 30S ribosomal subunit. Contacts proteins S4 and S8.</text>
</comment>
<comment type="domain">
    <text>The N-terminal domain interacts with the head of the 30S subunit; the C-terminal domain interacts with the body and contacts protein S4. The interaction surface between S4 and S5 is involved in control of translational fidelity.</text>
</comment>
<comment type="similarity">
    <text evidence="1">Belongs to the universal ribosomal protein uS5 family.</text>
</comment>
<proteinExistence type="inferred from homology"/>
<dbReference type="EMBL" id="AE017321">
    <property type="protein sequence ID" value="AAW70913.1"/>
    <property type="molecule type" value="Genomic_DNA"/>
</dbReference>
<dbReference type="RefSeq" id="WP_011256523.1">
    <property type="nucleotide sequence ID" value="NC_006833.1"/>
</dbReference>
<dbReference type="SMR" id="Q5GSW1"/>
<dbReference type="STRING" id="292805.Wbm0324"/>
<dbReference type="KEGG" id="wbm:Wbm0324"/>
<dbReference type="eggNOG" id="COG0098">
    <property type="taxonomic scope" value="Bacteria"/>
</dbReference>
<dbReference type="HOGENOM" id="CLU_065898_2_2_5"/>
<dbReference type="Proteomes" id="UP000000534">
    <property type="component" value="Chromosome"/>
</dbReference>
<dbReference type="GO" id="GO:0015935">
    <property type="term" value="C:small ribosomal subunit"/>
    <property type="evidence" value="ECO:0007669"/>
    <property type="project" value="InterPro"/>
</dbReference>
<dbReference type="GO" id="GO:0019843">
    <property type="term" value="F:rRNA binding"/>
    <property type="evidence" value="ECO:0007669"/>
    <property type="project" value="UniProtKB-UniRule"/>
</dbReference>
<dbReference type="GO" id="GO:0003735">
    <property type="term" value="F:structural constituent of ribosome"/>
    <property type="evidence" value="ECO:0007669"/>
    <property type="project" value="InterPro"/>
</dbReference>
<dbReference type="GO" id="GO:0006412">
    <property type="term" value="P:translation"/>
    <property type="evidence" value="ECO:0007669"/>
    <property type="project" value="UniProtKB-UniRule"/>
</dbReference>
<dbReference type="FunFam" id="3.30.230.10:FF:000002">
    <property type="entry name" value="30S ribosomal protein S5"/>
    <property type="match status" value="1"/>
</dbReference>
<dbReference type="Gene3D" id="3.30.160.20">
    <property type="match status" value="1"/>
</dbReference>
<dbReference type="Gene3D" id="3.30.230.10">
    <property type="match status" value="1"/>
</dbReference>
<dbReference type="HAMAP" id="MF_01307_B">
    <property type="entry name" value="Ribosomal_uS5_B"/>
    <property type="match status" value="1"/>
</dbReference>
<dbReference type="InterPro" id="IPR020568">
    <property type="entry name" value="Ribosomal_Su5_D2-typ_SF"/>
</dbReference>
<dbReference type="InterPro" id="IPR000851">
    <property type="entry name" value="Ribosomal_uS5"/>
</dbReference>
<dbReference type="InterPro" id="IPR005712">
    <property type="entry name" value="Ribosomal_uS5_bac-type"/>
</dbReference>
<dbReference type="InterPro" id="IPR005324">
    <property type="entry name" value="Ribosomal_uS5_C"/>
</dbReference>
<dbReference type="InterPro" id="IPR013810">
    <property type="entry name" value="Ribosomal_uS5_N"/>
</dbReference>
<dbReference type="InterPro" id="IPR018192">
    <property type="entry name" value="Ribosomal_uS5_N_CS"/>
</dbReference>
<dbReference type="InterPro" id="IPR014721">
    <property type="entry name" value="Ribsml_uS5_D2-typ_fold_subgr"/>
</dbReference>
<dbReference type="NCBIfam" id="TIGR01021">
    <property type="entry name" value="rpsE_bact"/>
    <property type="match status" value="1"/>
</dbReference>
<dbReference type="PANTHER" id="PTHR48277">
    <property type="entry name" value="MITOCHONDRIAL RIBOSOMAL PROTEIN S5"/>
    <property type="match status" value="1"/>
</dbReference>
<dbReference type="PANTHER" id="PTHR48277:SF1">
    <property type="entry name" value="MITOCHONDRIAL RIBOSOMAL PROTEIN S5"/>
    <property type="match status" value="1"/>
</dbReference>
<dbReference type="Pfam" id="PF00333">
    <property type="entry name" value="Ribosomal_S5"/>
    <property type="match status" value="1"/>
</dbReference>
<dbReference type="Pfam" id="PF03719">
    <property type="entry name" value="Ribosomal_S5_C"/>
    <property type="match status" value="1"/>
</dbReference>
<dbReference type="SUPFAM" id="SSF54768">
    <property type="entry name" value="dsRNA-binding domain-like"/>
    <property type="match status" value="1"/>
</dbReference>
<dbReference type="SUPFAM" id="SSF54211">
    <property type="entry name" value="Ribosomal protein S5 domain 2-like"/>
    <property type="match status" value="1"/>
</dbReference>
<dbReference type="PROSITE" id="PS00585">
    <property type="entry name" value="RIBOSOMAL_S5"/>
    <property type="match status" value="1"/>
</dbReference>
<dbReference type="PROSITE" id="PS50881">
    <property type="entry name" value="S5_DSRBD"/>
    <property type="match status" value="1"/>
</dbReference>
<name>RS5_WOLTR</name>